<comment type="function">
    <text evidence="1">Nucleotide-binding protein.</text>
</comment>
<comment type="similarity">
    <text evidence="1">Belongs to the YajQ family.</text>
</comment>
<dbReference type="EMBL" id="CP000267">
    <property type="protein sequence ID" value="ABD70408.1"/>
    <property type="molecule type" value="Genomic_DNA"/>
</dbReference>
<dbReference type="RefSeq" id="WP_011464974.1">
    <property type="nucleotide sequence ID" value="NC_007908.1"/>
</dbReference>
<dbReference type="SMR" id="Q21UZ5"/>
<dbReference type="STRING" id="338969.Rfer_2692"/>
<dbReference type="KEGG" id="rfr:Rfer_2692"/>
<dbReference type="eggNOG" id="COG1666">
    <property type="taxonomic scope" value="Bacteria"/>
</dbReference>
<dbReference type="HOGENOM" id="CLU_099839_1_0_4"/>
<dbReference type="OrthoDB" id="9801447at2"/>
<dbReference type="Proteomes" id="UP000008332">
    <property type="component" value="Chromosome"/>
</dbReference>
<dbReference type="GO" id="GO:0005829">
    <property type="term" value="C:cytosol"/>
    <property type="evidence" value="ECO:0007669"/>
    <property type="project" value="TreeGrafter"/>
</dbReference>
<dbReference type="GO" id="GO:0000166">
    <property type="term" value="F:nucleotide binding"/>
    <property type="evidence" value="ECO:0007669"/>
    <property type="project" value="TreeGrafter"/>
</dbReference>
<dbReference type="CDD" id="cd11740">
    <property type="entry name" value="YajQ_like"/>
    <property type="match status" value="1"/>
</dbReference>
<dbReference type="Gene3D" id="3.30.70.990">
    <property type="entry name" value="YajQ-like, domain 2"/>
    <property type="match status" value="1"/>
</dbReference>
<dbReference type="HAMAP" id="MF_00632">
    <property type="entry name" value="YajQ"/>
    <property type="match status" value="1"/>
</dbReference>
<dbReference type="InterPro" id="IPR007551">
    <property type="entry name" value="DUF520"/>
</dbReference>
<dbReference type="InterPro" id="IPR035570">
    <property type="entry name" value="UPF0234_N"/>
</dbReference>
<dbReference type="InterPro" id="IPR036183">
    <property type="entry name" value="YajQ-like_sf"/>
</dbReference>
<dbReference type="NCBIfam" id="NF003819">
    <property type="entry name" value="PRK05412.1"/>
    <property type="match status" value="1"/>
</dbReference>
<dbReference type="PANTHER" id="PTHR30476">
    <property type="entry name" value="UPF0234 PROTEIN YAJQ"/>
    <property type="match status" value="1"/>
</dbReference>
<dbReference type="PANTHER" id="PTHR30476:SF0">
    <property type="entry name" value="UPF0234 PROTEIN YAJQ"/>
    <property type="match status" value="1"/>
</dbReference>
<dbReference type="Pfam" id="PF04461">
    <property type="entry name" value="DUF520"/>
    <property type="match status" value="1"/>
</dbReference>
<dbReference type="SUPFAM" id="SSF89963">
    <property type="entry name" value="YajQ-like"/>
    <property type="match status" value="2"/>
</dbReference>
<protein>
    <recommendedName>
        <fullName evidence="1">Nucleotide-binding protein Rfer_2692</fullName>
    </recommendedName>
</protein>
<feature type="chain" id="PRO_0000261968" description="Nucleotide-binding protein Rfer_2692">
    <location>
        <begin position="1"/>
        <end position="161"/>
    </location>
</feature>
<keyword id="KW-0547">Nucleotide-binding</keyword>
<keyword id="KW-1185">Reference proteome</keyword>
<name>Y2692_ALBFT</name>
<proteinExistence type="inferred from homology"/>
<gene>
    <name type="ordered locus">Rfer_2692</name>
</gene>
<evidence type="ECO:0000255" key="1">
    <source>
        <dbReference type="HAMAP-Rule" id="MF_00632"/>
    </source>
</evidence>
<organism>
    <name type="scientific">Albidiferax ferrireducens (strain ATCC BAA-621 / DSM 15236 / T118)</name>
    <name type="common">Rhodoferax ferrireducens</name>
    <dbReference type="NCBI Taxonomy" id="338969"/>
    <lineage>
        <taxon>Bacteria</taxon>
        <taxon>Pseudomonadati</taxon>
        <taxon>Pseudomonadota</taxon>
        <taxon>Betaproteobacteria</taxon>
        <taxon>Burkholderiales</taxon>
        <taxon>Comamonadaceae</taxon>
        <taxon>Rhodoferax</taxon>
    </lineage>
</organism>
<reference key="1">
    <citation type="submission" date="2006-02" db="EMBL/GenBank/DDBJ databases">
        <title>Complete sequence of chromosome of Rhodoferax ferrireducens DSM 15236.</title>
        <authorList>
            <person name="Copeland A."/>
            <person name="Lucas S."/>
            <person name="Lapidus A."/>
            <person name="Barry K."/>
            <person name="Detter J.C."/>
            <person name="Glavina del Rio T."/>
            <person name="Hammon N."/>
            <person name="Israni S."/>
            <person name="Pitluck S."/>
            <person name="Brettin T."/>
            <person name="Bruce D."/>
            <person name="Han C."/>
            <person name="Tapia R."/>
            <person name="Gilna P."/>
            <person name="Kiss H."/>
            <person name="Schmutz J."/>
            <person name="Larimer F."/>
            <person name="Land M."/>
            <person name="Kyrpides N."/>
            <person name="Ivanova N."/>
            <person name="Richardson P."/>
        </authorList>
    </citation>
    <scope>NUCLEOTIDE SEQUENCE [LARGE SCALE GENOMIC DNA]</scope>
    <source>
        <strain>ATCC BAA-621 / DSM 15236 / T118</strain>
    </source>
</reference>
<accession>Q21UZ5</accession>
<sequence>MPSFDTVCEASMVDVKHAVENTTKEITTRFDFKGTPAAIELKDKEITLTGDADFQLSQIEDILRNKLTKRSVDVRFLDKGEVQKIGGDKVKQVIKVRNGIETELAKKIQRLIKDSKIKVQAAIQESKLRVTGAKRDDLQAAMALIKKDITEVPLSFDNFRD</sequence>